<dbReference type="EMBL" id="AAFI02000030">
    <property type="protein sequence ID" value="EAL67800.1"/>
    <property type="molecule type" value="Genomic_DNA"/>
</dbReference>
<dbReference type="RefSeq" id="XP_641782.1">
    <property type="nucleotide sequence ID" value="XM_636690.1"/>
</dbReference>
<dbReference type="SMR" id="Q54WZ5"/>
<dbReference type="STRING" id="44689.Q54WZ5"/>
<dbReference type="GlyCosmos" id="Q54WZ5">
    <property type="glycosylation" value="9 sites, No reported glycans"/>
</dbReference>
<dbReference type="GlyGen" id="Q54WZ5">
    <property type="glycosylation" value="9 sites"/>
</dbReference>
<dbReference type="PaxDb" id="44689-DDB0229843"/>
<dbReference type="EnsemblProtists" id="EAL67800">
    <property type="protein sequence ID" value="EAL67800"/>
    <property type="gene ID" value="DDB_G0279303"/>
</dbReference>
<dbReference type="GeneID" id="8621979"/>
<dbReference type="KEGG" id="ddi:DDB_G0279303"/>
<dbReference type="dictyBase" id="DDB_G0279303">
    <property type="gene designation" value="slob2"/>
</dbReference>
<dbReference type="VEuPathDB" id="AmoebaDB:DDB_G0279303"/>
<dbReference type="eggNOG" id="ENOG502QWJ5">
    <property type="taxonomic scope" value="Eukaryota"/>
</dbReference>
<dbReference type="HOGENOM" id="CLU_475245_0_0_1"/>
<dbReference type="InParanoid" id="Q54WZ5"/>
<dbReference type="OMA" id="SIFKPWY"/>
<dbReference type="PRO" id="PR:Q54WZ5"/>
<dbReference type="Proteomes" id="UP000002195">
    <property type="component" value="Chromosome 3"/>
</dbReference>
<dbReference type="GO" id="GO:0016020">
    <property type="term" value="C:membrane"/>
    <property type="evidence" value="ECO:0007669"/>
    <property type="project" value="UniProtKB-SubCell"/>
</dbReference>
<dbReference type="GO" id="GO:0003779">
    <property type="term" value="F:actin binding"/>
    <property type="evidence" value="ECO:0007669"/>
    <property type="project" value="InterPro"/>
</dbReference>
<dbReference type="GO" id="GO:0004672">
    <property type="term" value="F:protein kinase activity"/>
    <property type="evidence" value="ECO:0000318"/>
    <property type="project" value="GO_Central"/>
</dbReference>
<dbReference type="Gene3D" id="1.10.510.10">
    <property type="entry name" value="Transferase(Phosphotransferase) domain 1"/>
    <property type="match status" value="1"/>
</dbReference>
<dbReference type="InterPro" id="IPR011009">
    <property type="entry name" value="Kinase-like_dom_sf"/>
</dbReference>
<dbReference type="InterPro" id="IPR003124">
    <property type="entry name" value="WH2_dom"/>
</dbReference>
<dbReference type="PANTHER" id="PTHR46345:SF8">
    <property type="entry name" value="FORMIN 3, ISOFORM B"/>
    <property type="match status" value="1"/>
</dbReference>
<dbReference type="PANTHER" id="PTHR46345">
    <property type="entry name" value="INVERTED FORMIN-2"/>
    <property type="match status" value="1"/>
</dbReference>
<dbReference type="Pfam" id="PF02205">
    <property type="entry name" value="WH2"/>
    <property type="match status" value="1"/>
</dbReference>
<dbReference type="SUPFAM" id="SSF56112">
    <property type="entry name" value="Protein kinase-like (PK-like)"/>
    <property type="match status" value="1"/>
</dbReference>
<organism>
    <name type="scientific">Dictyostelium discoideum</name>
    <name type="common">Social amoeba</name>
    <dbReference type="NCBI Taxonomy" id="44689"/>
    <lineage>
        <taxon>Eukaryota</taxon>
        <taxon>Amoebozoa</taxon>
        <taxon>Evosea</taxon>
        <taxon>Eumycetozoa</taxon>
        <taxon>Dictyostelia</taxon>
        <taxon>Dictyosteliales</taxon>
        <taxon>Dictyosteliaceae</taxon>
        <taxon>Dictyostelium</taxon>
    </lineage>
</organism>
<keyword id="KW-0325">Glycoprotein</keyword>
<keyword id="KW-0472">Membrane</keyword>
<keyword id="KW-1185">Reference proteome</keyword>
<keyword id="KW-0812">Transmembrane</keyword>
<keyword id="KW-1133">Transmembrane helix</keyword>
<proteinExistence type="inferred from homology"/>
<name>SLOB2_DICDI</name>
<comment type="subcellular location">
    <subcellularLocation>
        <location evidence="3">Membrane</location>
        <topology evidence="3">Single-pass membrane protein</topology>
    </subcellularLocation>
</comment>
<comment type="domain">
    <text>The protein kinase domain is predicted to be catalytically inactive.</text>
</comment>
<comment type="similarity">
    <text evidence="3">Belongs to the protein kinase superfamily. Ser/Thr protein kinase family.</text>
</comment>
<sequence>MEYYYYIIIAAVGGFAILTFIIIVVLRLKKSQKMREPLLPKEKGNVFVYKRDTQVQEKEEQVMMNARLYLRSTIYSLQDKIPKFGSRSDKVYFGVLGNSLNKLENDRIMAMVPVSKHWPIPLNSEAGRTTFRTIIKSLEIHPFISVPLLVDFIPEKHVAVSVRPFYADRGSLRDFIHKSKPKMPYADKYDTHLQLNEKIVSKFGRQILEALIFLKNHNFPYFHLNSANVLVDDQICLISDYENSFLGLEPRFSDFIRQHNEKIDPDVLSFGLVLFEMACGYEMENPHSVDISIPAHCYPEVRKVLEAIFKPFYGTPITLEELSKMDFFSYHKFKNLPLHRLTYTSRERDMMDAVIKLNKTFLSTNSKPNSKDLSQPKLKDLKKQKKRKQLVFTQSFEPIKMESQNGGGAAGGEYGNEGGYAISTSSSLPSNFLANVKPANSTSYSLLSNTTTNTTNTSTSSSLNSSFNSNVSTSYSNATTTTNTTSASSVSPPISSPPPPPPPPPPSKSSGPPPPPPPPPKSSGPPPPPPPKSSPPPPADGSRKGLLSSIESFSSSKLKKTKTVDKSGPLLKKS</sequence>
<feature type="chain" id="PRO_0000362073" description="Probable inactive serine/threonine-protein kinase slob2">
    <location>
        <begin position="1"/>
        <end position="574"/>
    </location>
</feature>
<feature type="transmembrane region" description="Helical" evidence="1">
    <location>
        <begin position="6"/>
        <end position="26"/>
    </location>
</feature>
<feature type="domain" description="Protein kinase">
    <location>
        <begin position="166"/>
        <end position="346"/>
    </location>
</feature>
<feature type="region of interest" description="Disordered" evidence="2">
    <location>
        <begin position="366"/>
        <end position="386"/>
    </location>
</feature>
<feature type="region of interest" description="Disordered" evidence="2">
    <location>
        <begin position="450"/>
        <end position="574"/>
    </location>
</feature>
<feature type="compositionally biased region" description="Low complexity" evidence="2">
    <location>
        <begin position="450"/>
        <end position="493"/>
    </location>
</feature>
<feature type="compositionally biased region" description="Pro residues" evidence="2">
    <location>
        <begin position="494"/>
        <end position="539"/>
    </location>
</feature>
<feature type="compositionally biased region" description="Low complexity" evidence="2">
    <location>
        <begin position="546"/>
        <end position="556"/>
    </location>
</feature>
<feature type="glycosylation site" description="N-linked (GlcNAc...) asparagine" evidence="1">
    <location>
        <position position="358"/>
    </location>
</feature>
<feature type="glycosylation site" description="N-linked (GlcNAc...) asparagine" evidence="1">
    <location>
        <position position="440"/>
    </location>
</feature>
<feature type="glycosylation site" description="N-linked (GlcNAc...) asparagine" evidence="1">
    <location>
        <position position="449"/>
    </location>
</feature>
<feature type="glycosylation site" description="N-linked (GlcNAc...) asparagine" evidence="1">
    <location>
        <position position="453"/>
    </location>
</feature>
<feature type="glycosylation site" description="N-linked (GlcNAc...) asparagine" evidence="1">
    <location>
        <position position="456"/>
    </location>
</feature>
<feature type="glycosylation site" description="N-linked (GlcNAc...) asparagine" evidence="1">
    <location>
        <position position="464"/>
    </location>
</feature>
<feature type="glycosylation site" description="N-linked (GlcNAc...) asparagine" evidence="1">
    <location>
        <position position="470"/>
    </location>
</feature>
<feature type="glycosylation site" description="N-linked (GlcNAc...) asparagine" evidence="1">
    <location>
        <position position="477"/>
    </location>
</feature>
<feature type="glycosylation site" description="N-linked (GlcNAc...) asparagine" evidence="1">
    <location>
        <position position="483"/>
    </location>
</feature>
<evidence type="ECO:0000255" key="1"/>
<evidence type="ECO:0000256" key="2">
    <source>
        <dbReference type="SAM" id="MobiDB-lite"/>
    </source>
</evidence>
<evidence type="ECO:0000305" key="3"/>
<accession>Q54WZ5</accession>
<protein>
    <recommendedName>
        <fullName>Probable inactive serine/threonine-protein kinase slob2</fullName>
    </recommendedName>
    <alternativeName>
        <fullName>Slowpoke-binding protein 2</fullName>
    </alternativeName>
</protein>
<gene>
    <name type="primary">slob2</name>
    <name type="ORF">DDB_G0279303</name>
</gene>
<reference key="1">
    <citation type="journal article" date="2005" name="Nature">
        <title>The genome of the social amoeba Dictyostelium discoideum.</title>
        <authorList>
            <person name="Eichinger L."/>
            <person name="Pachebat J.A."/>
            <person name="Gloeckner G."/>
            <person name="Rajandream M.A."/>
            <person name="Sucgang R."/>
            <person name="Berriman M."/>
            <person name="Song J."/>
            <person name="Olsen R."/>
            <person name="Szafranski K."/>
            <person name="Xu Q."/>
            <person name="Tunggal B."/>
            <person name="Kummerfeld S."/>
            <person name="Madera M."/>
            <person name="Konfortov B.A."/>
            <person name="Rivero F."/>
            <person name="Bankier A.T."/>
            <person name="Lehmann R."/>
            <person name="Hamlin N."/>
            <person name="Davies R."/>
            <person name="Gaudet P."/>
            <person name="Fey P."/>
            <person name="Pilcher K."/>
            <person name="Chen G."/>
            <person name="Saunders D."/>
            <person name="Sodergren E.J."/>
            <person name="Davis P."/>
            <person name="Kerhornou A."/>
            <person name="Nie X."/>
            <person name="Hall N."/>
            <person name="Anjard C."/>
            <person name="Hemphill L."/>
            <person name="Bason N."/>
            <person name="Farbrother P."/>
            <person name="Desany B."/>
            <person name="Just E."/>
            <person name="Morio T."/>
            <person name="Rost R."/>
            <person name="Churcher C.M."/>
            <person name="Cooper J."/>
            <person name="Haydock S."/>
            <person name="van Driessche N."/>
            <person name="Cronin A."/>
            <person name="Goodhead I."/>
            <person name="Muzny D.M."/>
            <person name="Mourier T."/>
            <person name="Pain A."/>
            <person name="Lu M."/>
            <person name="Harper D."/>
            <person name="Lindsay R."/>
            <person name="Hauser H."/>
            <person name="James K.D."/>
            <person name="Quiles M."/>
            <person name="Madan Babu M."/>
            <person name="Saito T."/>
            <person name="Buchrieser C."/>
            <person name="Wardroper A."/>
            <person name="Felder M."/>
            <person name="Thangavelu M."/>
            <person name="Johnson D."/>
            <person name="Knights A."/>
            <person name="Loulseged H."/>
            <person name="Mungall K.L."/>
            <person name="Oliver K."/>
            <person name="Price C."/>
            <person name="Quail M.A."/>
            <person name="Urushihara H."/>
            <person name="Hernandez J."/>
            <person name="Rabbinowitsch E."/>
            <person name="Steffen D."/>
            <person name="Sanders M."/>
            <person name="Ma J."/>
            <person name="Kohara Y."/>
            <person name="Sharp S."/>
            <person name="Simmonds M.N."/>
            <person name="Spiegler S."/>
            <person name="Tivey A."/>
            <person name="Sugano S."/>
            <person name="White B."/>
            <person name="Walker D."/>
            <person name="Woodward J.R."/>
            <person name="Winckler T."/>
            <person name="Tanaka Y."/>
            <person name="Shaulsky G."/>
            <person name="Schleicher M."/>
            <person name="Weinstock G.M."/>
            <person name="Rosenthal A."/>
            <person name="Cox E.C."/>
            <person name="Chisholm R.L."/>
            <person name="Gibbs R.A."/>
            <person name="Loomis W.F."/>
            <person name="Platzer M."/>
            <person name="Kay R.R."/>
            <person name="Williams J.G."/>
            <person name="Dear P.H."/>
            <person name="Noegel A.A."/>
            <person name="Barrell B.G."/>
            <person name="Kuspa A."/>
        </authorList>
    </citation>
    <scope>NUCLEOTIDE SEQUENCE [LARGE SCALE GENOMIC DNA]</scope>
    <source>
        <strain>AX4</strain>
    </source>
</reference>